<protein>
    <recommendedName>
        <fullName>Receptor-type adenylate cyclase</fullName>
        <ecNumber>4.6.1.1</ecNumber>
    </recommendedName>
    <alternativeName>
        <fullName>ATP pyrophosphate-lyase</fullName>
    </alternativeName>
    <alternativeName>
        <fullName>Adenylyl cyclase</fullName>
    </alternativeName>
</protein>
<sequence length="745" mass="81653">GELGQTDRFFVRIINTTVSEAAHTLTSEKEERIVTAVFGIVSEDMLDTPNTTFIDPLRLSPRLNKFRRNVIHLSPTLEQQLFVLASHLQSIGSSKALAVICSEESNDIGDAVRRTLAEFDVPLESVRTRMDGEALDGYLPAGGDVFVIGLSVADVEVIAKKLEKHSALRVIVLFSDVALLYDVFSVAFNGTTGCERLVFATNLPHWSDATPSSVTVQRFHTALSDPKMWTPLSLLAFATGRLMQSILPRMEKVGSDTLANFFYADSSVVVDGMRYGVFDDIECKPAGSDLEVCASNYGATQISVRSMSRTFNASIALLAEPMTPSMRFRDPNEGALTRAQLIGVVVGTIFAVLLLLALGIVLCVALRNTRDNDSAPKEFTDPVTLIFTDIESSTALWAAHPGMMADAVATHHRLIRSLIALYGAYEVKTVGDSFMIACRSAFAAVELARDLQLTLVHHDWGTVAIDESYRKFEEERAVEDSDYAPPTARLDSAVYCKLWNGLRVRAGIHTGLCDIAHDEVTKGYDYYGRTPNLAARTESAANGGQVLVTGATYYSLSVAERARLDATPIGPVPLRGVPEPVEMYQLNAVSGRTFAALRLDRKVDLINDESDATDGVYSECGSTHGELSHSAQTIMMVLCALIGTFTAPQREKLLIPFCERWRVSLPRKTGTAWDENYSREVVRCIALKVGHVINFDSSAYDFDDLPVSMRRQSSFIVLSHQLMESIQETTQQGPSGSDEVARTCV</sequence>
<accession>Q26896</accession>
<proteinExistence type="evidence at transcript level"/>
<feature type="chain" id="PRO_0000195740" description="Receptor-type adenylate cyclase">
    <location>
        <begin position="1" status="less than"/>
        <end position="745"/>
    </location>
</feature>
<feature type="topological domain" description="Extracellular" evidence="3">
    <location>
        <begin position="1" status="less than"/>
        <end position="341"/>
    </location>
</feature>
<feature type="transmembrane region" description="Helical" evidence="3">
    <location>
        <begin position="342"/>
        <end position="362"/>
    </location>
</feature>
<feature type="topological domain" description="Cytoplasmic" evidence="3">
    <location>
        <begin position="363"/>
        <end position="745"/>
    </location>
</feature>
<feature type="domain" description="Guanylate cyclase" evidence="4">
    <location>
        <begin position="384"/>
        <end position="538"/>
    </location>
</feature>
<feature type="binding site" evidence="2">
    <location>
        <position position="389"/>
    </location>
    <ligand>
        <name>Mg(2+)</name>
        <dbReference type="ChEBI" id="CHEBI:18420"/>
    </ligand>
</feature>
<feature type="binding site" evidence="2">
    <location>
        <position position="432"/>
    </location>
    <ligand>
        <name>Mg(2+)</name>
        <dbReference type="ChEBI" id="CHEBI:18420"/>
    </ligand>
</feature>
<feature type="glycosylation site" description="N-linked (GlcNAc...) asparagine" evidence="3">
    <location>
        <position position="15"/>
    </location>
</feature>
<feature type="glycosylation site" description="N-linked (GlcNAc...) asparagine" evidence="3">
    <location>
        <position position="50"/>
    </location>
</feature>
<feature type="glycosylation site" description="N-linked (GlcNAc...) asparagine" evidence="3">
    <location>
        <position position="189"/>
    </location>
</feature>
<feature type="glycosylation site" description="N-linked (GlcNAc...) asparagine" evidence="3">
    <location>
        <position position="312"/>
    </location>
</feature>
<feature type="non-terminal residue">
    <location>
        <position position="1"/>
    </location>
</feature>
<dbReference type="EC" id="4.6.1.1"/>
<dbReference type="EMBL" id="Z67964">
    <property type="protein sequence ID" value="CAA91903.1"/>
    <property type="molecule type" value="mRNA"/>
</dbReference>
<dbReference type="SMR" id="Q26896"/>
<dbReference type="VEuPathDB" id="TriTrypDB:TcIL3000.11.16970"/>
<dbReference type="VEuPathDB" id="TriTrypDB:TcIL3000.A.H_000860400"/>
<dbReference type="GO" id="GO:0005886">
    <property type="term" value="C:plasma membrane"/>
    <property type="evidence" value="ECO:0007669"/>
    <property type="project" value="UniProtKB-SubCell"/>
</dbReference>
<dbReference type="GO" id="GO:0004016">
    <property type="term" value="F:adenylate cyclase activity"/>
    <property type="evidence" value="ECO:0007669"/>
    <property type="project" value="UniProtKB-EC"/>
</dbReference>
<dbReference type="GO" id="GO:0005524">
    <property type="term" value="F:ATP binding"/>
    <property type="evidence" value="ECO:0007669"/>
    <property type="project" value="UniProtKB-KW"/>
</dbReference>
<dbReference type="GO" id="GO:0046872">
    <property type="term" value="F:metal ion binding"/>
    <property type="evidence" value="ECO:0007669"/>
    <property type="project" value="UniProtKB-KW"/>
</dbReference>
<dbReference type="GO" id="GO:0006171">
    <property type="term" value="P:cAMP biosynthetic process"/>
    <property type="evidence" value="ECO:0007669"/>
    <property type="project" value="UniProtKB-KW"/>
</dbReference>
<dbReference type="GO" id="GO:0035556">
    <property type="term" value="P:intracellular signal transduction"/>
    <property type="evidence" value="ECO:0007669"/>
    <property type="project" value="InterPro"/>
</dbReference>
<dbReference type="CDD" id="cd07302">
    <property type="entry name" value="CHD"/>
    <property type="match status" value="1"/>
</dbReference>
<dbReference type="FunFam" id="3.30.70.1230:FF:000022">
    <property type="entry name" value="Receptor-type adenylate cyclase GRESAG 4, putative"/>
    <property type="match status" value="1"/>
</dbReference>
<dbReference type="Gene3D" id="3.30.70.1230">
    <property type="entry name" value="Nucleotide cyclase"/>
    <property type="match status" value="1"/>
</dbReference>
<dbReference type="InterPro" id="IPR001054">
    <property type="entry name" value="A/G_cyclase"/>
</dbReference>
<dbReference type="InterPro" id="IPR050697">
    <property type="entry name" value="Adenylyl/Guanylyl_Cyclase_3/4"/>
</dbReference>
<dbReference type="InterPro" id="IPR029787">
    <property type="entry name" value="Nucleotide_cyclase"/>
</dbReference>
<dbReference type="PANTHER" id="PTHR43081:SF1">
    <property type="entry name" value="ADENYLATE CYCLASE, TERMINAL-DIFFERENTIATION SPECIFIC"/>
    <property type="match status" value="1"/>
</dbReference>
<dbReference type="PANTHER" id="PTHR43081">
    <property type="entry name" value="ADENYLATE CYCLASE, TERMINAL-DIFFERENTIATION SPECIFIC-RELATED"/>
    <property type="match status" value="1"/>
</dbReference>
<dbReference type="Pfam" id="PF00211">
    <property type="entry name" value="Guanylate_cyc"/>
    <property type="match status" value="1"/>
</dbReference>
<dbReference type="Pfam" id="PF25493">
    <property type="entry name" value="Peripla_BP_A-cyclase"/>
    <property type="match status" value="1"/>
</dbReference>
<dbReference type="SMART" id="SM00044">
    <property type="entry name" value="CYCc"/>
    <property type="match status" value="1"/>
</dbReference>
<dbReference type="SUPFAM" id="SSF55073">
    <property type="entry name" value="Nucleotide cyclase"/>
    <property type="match status" value="1"/>
</dbReference>
<dbReference type="PROSITE" id="PS50125">
    <property type="entry name" value="GUANYLATE_CYCLASE_2"/>
    <property type="match status" value="1"/>
</dbReference>
<comment type="function">
    <text>Could act as a receptor for an unknown ligand.</text>
</comment>
<comment type="catalytic activity">
    <reaction>
        <text>ATP = 3',5'-cyclic AMP + diphosphate</text>
        <dbReference type="Rhea" id="RHEA:15389"/>
        <dbReference type="ChEBI" id="CHEBI:30616"/>
        <dbReference type="ChEBI" id="CHEBI:33019"/>
        <dbReference type="ChEBI" id="CHEBI:58165"/>
        <dbReference type="EC" id="4.6.1.1"/>
    </reaction>
</comment>
<comment type="cofactor">
    <cofactor evidence="1">
        <name>Mg(2+)</name>
        <dbReference type="ChEBI" id="CHEBI:18420"/>
    </cofactor>
    <text evidence="1">Binds 1 Mg(2+) ion per subunit.</text>
</comment>
<comment type="subcellular location">
    <subcellularLocation>
        <location evidence="1">Cell membrane</location>
        <topology evidence="1">Multi-pass membrane protein</topology>
    </subcellularLocation>
</comment>
<comment type="similarity">
    <text evidence="5">Belongs to the adenylyl cyclase class-3 family.</text>
</comment>
<organism>
    <name type="scientific">Trypanosoma congolense</name>
    <dbReference type="NCBI Taxonomy" id="5692"/>
    <lineage>
        <taxon>Eukaryota</taxon>
        <taxon>Discoba</taxon>
        <taxon>Euglenozoa</taxon>
        <taxon>Kinetoplastea</taxon>
        <taxon>Metakinetoplastina</taxon>
        <taxon>Trypanosomatida</taxon>
        <taxon>Trypanosomatidae</taxon>
        <taxon>Trypanosoma</taxon>
        <taxon>Nannomonas</taxon>
    </lineage>
</organism>
<evidence type="ECO:0000250" key="1"/>
<evidence type="ECO:0000250" key="2">
    <source>
        <dbReference type="UniProtKB" id="Q99280"/>
    </source>
</evidence>
<evidence type="ECO:0000255" key="3"/>
<evidence type="ECO:0000255" key="4">
    <source>
        <dbReference type="PROSITE-ProRule" id="PRU00099"/>
    </source>
</evidence>
<evidence type="ECO:0000305" key="5"/>
<reference key="1">
    <citation type="journal article" date="1996" name="Mol. Biochem. Parasitol.">
        <title>Families of adenylate cyclase genes in Trypanosoma brucei.</title>
        <authorList>
            <person name="Alexandre S."/>
            <person name="Paindavoine P."/>
            <person name="Hanocq-Quertier J."/>
            <person name="Paturiaux-Hanocq F."/>
            <person name="Tebabi P."/>
            <person name="Pays E."/>
        </authorList>
    </citation>
    <scope>NUCLEOTIDE SEQUENCE [MRNA]</scope>
</reference>
<keyword id="KW-0067">ATP-binding</keyword>
<keyword id="KW-0115">cAMP biosynthesis</keyword>
<keyword id="KW-1003">Cell membrane</keyword>
<keyword id="KW-0325">Glycoprotein</keyword>
<keyword id="KW-0456">Lyase</keyword>
<keyword id="KW-0460">Magnesium</keyword>
<keyword id="KW-0472">Membrane</keyword>
<keyword id="KW-0479">Metal-binding</keyword>
<keyword id="KW-0547">Nucleotide-binding</keyword>
<keyword id="KW-0675">Receptor</keyword>
<keyword id="KW-0812">Transmembrane</keyword>
<keyword id="KW-1133">Transmembrane helix</keyword>
<name>CYAA_TRYCO</name>